<feature type="chain" id="PRO_0000404320" description="Regulator of ribonuclease activity B">
    <location>
        <begin position="1"/>
        <end position="141"/>
    </location>
</feature>
<feature type="region of interest" description="Disordered" evidence="2">
    <location>
        <begin position="112"/>
        <end position="141"/>
    </location>
</feature>
<feature type="compositionally biased region" description="Acidic residues" evidence="2">
    <location>
        <begin position="119"/>
        <end position="141"/>
    </location>
</feature>
<name>RRAB_XENNA</name>
<reference key="1">
    <citation type="journal article" date="2011" name="PLoS ONE">
        <title>The entomopathogenic bacterial endosymbionts xenorhabdus and photorhabdus: convergent lifestyles from divergent genomes.</title>
        <authorList>
            <person name="Chaston J.M."/>
            <person name="Suen G."/>
            <person name="Tucker S.L."/>
            <person name="Andersen A.W."/>
            <person name="Bhasin A."/>
            <person name="Bode E."/>
            <person name="Bode H.B."/>
            <person name="Brachmann A.O."/>
            <person name="Cowles C.E."/>
            <person name="Cowles K.N."/>
            <person name="Darby C."/>
            <person name="de Leon L."/>
            <person name="Drace K."/>
            <person name="Du Z."/>
            <person name="Givaudan A."/>
            <person name="Herbert Tran E.E."/>
            <person name="Jewell K.A."/>
            <person name="Knack J.J."/>
            <person name="Krasomil-Osterfeld K.C."/>
            <person name="Kukor R."/>
            <person name="Lanois A."/>
            <person name="Latreille P."/>
            <person name="Leimgruber N.K."/>
            <person name="Lipke C.M."/>
            <person name="Liu R."/>
            <person name="Lu X."/>
            <person name="Martens E.C."/>
            <person name="Marri P.R."/>
            <person name="Medigue C."/>
            <person name="Menard M.L."/>
            <person name="Miller N.M."/>
            <person name="Morales-Soto N."/>
            <person name="Norton S."/>
            <person name="Ogier J.C."/>
            <person name="Orchard S.S."/>
            <person name="Park D."/>
            <person name="Park Y."/>
            <person name="Qurollo B.A."/>
            <person name="Sugar D.R."/>
            <person name="Richards G.R."/>
            <person name="Rouy Z."/>
            <person name="Slominski B."/>
            <person name="Slominski K."/>
            <person name="Snyder H."/>
            <person name="Tjaden B.C."/>
            <person name="van der Hoeven R."/>
            <person name="Welch R.D."/>
            <person name="Wheeler C."/>
            <person name="Xiang B."/>
            <person name="Barbazuk B."/>
            <person name="Gaudriault S."/>
            <person name="Goodner B."/>
            <person name="Slater S.C."/>
            <person name="Forst S."/>
            <person name="Goldman B.S."/>
            <person name="Goodrich-Blair H."/>
        </authorList>
    </citation>
    <scope>NUCLEOTIDE SEQUENCE [LARGE SCALE GENOMIC DNA]</scope>
    <source>
        <strain>ATCC 19061 / DSM 3370 / CCUG 14189 / LMG 1036 / NCIMB 9965 / AN6</strain>
    </source>
</reference>
<organism>
    <name type="scientific">Xenorhabdus nematophila (strain ATCC 19061 / DSM 3370 / CCUG 14189 / LMG 1036 / NCIMB 9965 / AN6)</name>
    <dbReference type="NCBI Taxonomy" id="406817"/>
    <lineage>
        <taxon>Bacteria</taxon>
        <taxon>Pseudomonadati</taxon>
        <taxon>Pseudomonadota</taxon>
        <taxon>Gammaproteobacteria</taxon>
        <taxon>Enterobacterales</taxon>
        <taxon>Morganellaceae</taxon>
        <taxon>Xenorhabdus</taxon>
    </lineage>
</organism>
<keyword id="KW-0963">Cytoplasm</keyword>
<keyword id="KW-1185">Reference proteome</keyword>
<evidence type="ECO:0000255" key="1">
    <source>
        <dbReference type="HAMAP-Rule" id="MF_01888"/>
    </source>
</evidence>
<evidence type="ECO:0000256" key="2">
    <source>
        <dbReference type="SAM" id="MobiDB-lite"/>
    </source>
</evidence>
<proteinExistence type="inferred from homology"/>
<gene>
    <name evidence="1" type="primary">rraB</name>
    <name type="ordered locus">XNC1_0553</name>
</gene>
<comment type="function">
    <text evidence="1">Globally modulates RNA abundance by binding to RNase E (Rne) and regulating its endonucleolytic activity. Can modulate Rne action in a substrate-dependent manner by altering the composition of the degradosome.</text>
</comment>
<comment type="subunit">
    <text evidence="1">Interacts with the C-terminal region of Rne.</text>
</comment>
<comment type="subcellular location">
    <subcellularLocation>
        <location evidence="1">Cytoplasm</location>
    </subcellularLocation>
</comment>
<comment type="similarity">
    <text evidence="1">Belongs to the RraB family.</text>
</comment>
<accession>D3VIS7</accession>
<dbReference type="EMBL" id="FN667742">
    <property type="protein sequence ID" value="CBJ88627.1"/>
    <property type="molecule type" value="Genomic_DNA"/>
</dbReference>
<dbReference type="RefSeq" id="WP_013183330.1">
    <property type="nucleotide sequence ID" value="NC_014228.1"/>
</dbReference>
<dbReference type="SMR" id="D3VIS7"/>
<dbReference type="STRING" id="406817.XNC1_0553"/>
<dbReference type="GeneID" id="24904609"/>
<dbReference type="KEGG" id="xne:XNC1_0553"/>
<dbReference type="eggNOG" id="COG3076">
    <property type="taxonomic scope" value="Bacteria"/>
</dbReference>
<dbReference type="HOGENOM" id="CLU_128640_0_0_6"/>
<dbReference type="Proteomes" id="UP000008075">
    <property type="component" value="Chromosome"/>
</dbReference>
<dbReference type="GO" id="GO:0005737">
    <property type="term" value="C:cytoplasm"/>
    <property type="evidence" value="ECO:0007669"/>
    <property type="project" value="UniProtKB-SubCell"/>
</dbReference>
<dbReference type="GO" id="GO:0060698">
    <property type="term" value="F:endoribonuclease inhibitor activity"/>
    <property type="evidence" value="ECO:0007669"/>
    <property type="project" value="UniProtKB-UniRule"/>
</dbReference>
<dbReference type="GO" id="GO:0019899">
    <property type="term" value="F:enzyme binding"/>
    <property type="evidence" value="ECO:0007669"/>
    <property type="project" value="UniProtKB-UniRule"/>
</dbReference>
<dbReference type="Gene3D" id="3.30.70.970">
    <property type="entry name" value="RraB-like"/>
    <property type="match status" value="1"/>
</dbReference>
<dbReference type="HAMAP" id="MF_01888">
    <property type="entry name" value="RraB"/>
    <property type="match status" value="1"/>
</dbReference>
<dbReference type="InterPro" id="IPR016716">
    <property type="entry name" value="RraB"/>
</dbReference>
<dbReference type="InterPro" id="IPR036701">
    <property type="entry name" value="RraB-like_sf"/>
</dbReference>
<dbReference type="InterPro" id="IPR009671">
    <property type="entry name" value="RraB_dom"/>
</dbReference>
<dbReference type="NCBIfam" id="NF008393">
    <property type="entry name" value="PRK11191.1"/>
    <property type="match status" value="1"/>
</dbReference>
<dbReference type="Pfam" id="PF06877">
    <property type="entry name" value="RraB"/>
    <property type="match status" value="1"/>
</dbReference>
<dbReference type="PIRSF" id="PIRSF018193">
    <property type="entry name" value="UCP018193"/>
    <property type="match status" value="1"/>
</dbReference>
<dbReference type="SUPFAM" id="SSF89946">
    <property type="entry name" value="Hypothetical protein VC0424"/>
    <property type="match status" value="1"/>
</dbReference>
<sequence length="141" mass="16139">MADPHVLEEQFEETRSIIEELLEDGSDPDATYIIEHHFSAEDFDQLEKAAVEAFKLGYEVTDAEELETEDRVILMCCDVISESRLEVDLINAQVKQLADLAEKMGVNYDGWGTYFEDPNAPDDEDDNDDLFPPEEDEPRLH</sequence>
<protein>
    <recommendedName>
        <fullName evidence="1">Regulator of ribonuclease activity B</fullName>
    </recommendedName>
</protein>